<gene>
    <name evidence="1" type="primary">rplT</name>
    <name type="ordered locus">LCK_00569</name>
</gene>
<feature type="chain" id="PRO_0000355472" description="Large ribosomal subunit protein bL20">
    <location>
        <begin position="1"/>
        <end position="139"/>
    </location>
</feature>
<protein>
    <recommendedName>
        <fullName evidence="1">Large ribosomal subunit protein bL20</fullName>
    </recommendedName>
    <alternativeName>
        <fullName evidence="2">50S ribosomal protein L20</fullName>
    </alternativeName>
</protein>
<evidence type="ECO:0000255" key="1">
    <source>
        <dbReference type="HAMAP-Rule" id="MF_00382"/>
    </source>
</evidence>
<evidence type="ECO:0000305" key="2"/>
<organism>
    <name type="scientific">Leuconostoc citreum (strain KM20)</name>
    <dbReference type="NCBI Taxonomy" id="349519"/>
    <lineage>
        <taxon>Bacteria</taxon>
        <taxon>Bacillati</taxon>
        <taxon>Bacillota</taxon>
        <taxon>Bacilli</taxon>
        <taxon>Lactobacillales</taxon>
        <taxon>Lactobacillaceae</taxon>
        <taxon>Leuconostoc</taxon>
    </lineage>
</organism>
<accession>B1MY00</accession>
<dbReference type="EMBL" id="DQ489736">
    <property type="protein sequence ID" value="ACA82402.1"/>
    <property type="molecule type" value="Genomic_DNA"/>
</dbReference>
<dbReference type="RefSeq" id="WP_004900351.1">
    <property type="nucleotide sequence ID" value="NC_010471.1"/>
</dbReference>
<dbReference type="SMR" id="B1MY00"/>
<dbReference type="STRING" id="349519.LCK_00569"/>
<dbReference type="GeneID" id="61102499"/>
<dbReference type="KEGG" id="lci:LCK_00569"/>
<dbReference type="eggNOG" id="COG0292">
    <property type="taxonomic scope" value="Bacteria"/>
</dbReference>
<dbReference type="HOGENOM" id="CLU_123265_0_1_9"/>
<dbReference type="OrthoDB" id="9808966at2"/>
<dbReference type="Proteomes" id="UP000002166">
    <property type="component" value="Chromosome"/>
</dbReference>
<dbReference type="GO" id="GO:1990904">
    <property type="term" value="C:ribonucleoprotein complex"/>
    <property type="evidence" value="ECO:0007669"/>
    <property type="project" value="UniProtKB-KW"/>
</dbReference>
<dbReference type="GO" id="GO:0005840">
    <property type="term" value="C:ribosome"/>
    <property type="evidence" value="ECO:0007669"/>
    <property type="project" value="UniProtKB-KW"/>
</dbReference>
<dbReference type="GO" id="GO:0019843">
    <property type="term" value="F:rRNA binding"/>
    <property type="evidence" value="ECO:0007669"/>
    <property type="project" value="UniProtKB-UniRule"/>
</dbReference>
<dbReference type="GO" id="GO:0003735">
    <property type="term" value="F:structural constituent of ribosome"/>
    <property type="evidence" value="ECO:0007669"/>
    <property type="project" value="InterPro"/>
</dbReference>
<dbReference type="GO" id="GO:0000027">
    <property type="term" value="P:ribosomal large subunit assembly"/>
    <property type="evidence" value="ECO:0007669"/>
    <property type="project" value="UniProtKB-UniRule"/>
</dbReference>
<dbReference type="GO" id="GO:0006412">
    <property type="term" value="P:translation"/>
    <property type="evidence" value="ECO:0007669"/>
    <property type="project" value="InterPro"/>
</dbReference>
<dbReference type="CDD" id="cd07026">
    <property type="entry name" value="Ribosomal_L20"/>
    <property type="match status" value="1"/>
</dbReference>
<dbReference type="FunFam" id="1.10.1900.20:FF:000001">
    <property type="entry name" value="50S ribosomal protein L20"/>
    <property type="match status" value="1"/>
</dbReference>
<dbReference type="Gene3D" id="6.10.160.10">
    <property type="match status" value="1"/>
</dbReference>
<dbReference type="Gene3D" id="1.10.1900.20">
    <property type="entry name" value="Ribosomal protein L20"/>
    <property type="match status" value="1"/>
</dbReference>
<dbReference type="HAMAP" id="MF_00382">
    <property type="entry name" value="Ribosomal_bL20"/>
    <property type="match status" value="1"/>
</dbReference>
<dbReference type="InterPro" id="IPR005813">
    <property type="entry name" value="Ribosomal_bL20"/>
</dbReference>
<dbReference type="InterPro" id="IPR049946">
    <property type="entry name" value="RIBOSOMAL_L20_CS"/>
</dbReference>
<dbReference type="InterPro" id="IPR035566">
    <property type="entry name" value="Ribosomal_protein_bL20_C"/>
</dbReference>
<dbReference type="NCBIfam" id="TIGR01032">
    <property type="entry name" value="rplT_bact"/>
    <property type="match status" value="1"/>
</dbReference>
<dbReference type="PANTHER" id="PTHR10986">
    <property type="entry name" value="39S RIBOSOMAL PROTEIN L20"/>
    <property type="match status" value="1"/>
</dbReference>
<dbReference type="Pfam" id="PF00453">
    <property type="entry name" value="Ribosomal_L20"/>
    <property type="match status" value="1"/>
</dbReference>
<dbReference type="PRINTS" id="PR00062">
    <property type="entry name" value="RIBOSOMALL20"/>
</dbReference>
<dbReference type="SUPFAM" id="SSF74731">
    <property type="entry name" value="Ribosomal protein L20"/>
    <property type="match status" value="1"/>
</dbReference>
<dbReference type="PROSITE" id="PS00937">
    <property type="entry name" value="RIBOSOMAL_L20"/>
    <property type="match status" value="1"/>
</dbReference>
<name>RL20_LEUCK</name>
<reference key="1">
    <citation type="journal article" date="2008" name="J. Bacteriol.">
        <title>Complete genome sequence of Leuconostoc citreum KM20.</title>
        <authorList>
            <person name="Kim J.F."/>
            <person name="Jeong H."/>
            <person name="Lee J.-S."/>
            <person name="Choi S.-H."/>
            <person name="Ha M."/>
            <person name="Hur C.-G."/>
            <person name="Kim J.-S."/>
            <person name="Lee S."/>
            <person name="Park H.-S."/>
            <person name="Park Y.-H."/>
            <person name="Oh T.K."/>
        </authorList>
    </citation>
    <scope>NUCLEOTIDE SEQUENCE [LARGE SCALE GENOMIC DNA]</scope>
    <source>
        <strain>KM20</strain>
    </source>
</reference>
<sequence length="139" mass="15892">MRVKGGTVSRARRKKMVKLAKGYRGQRRINFKVAKQQVWKSYLYAYRDRKNTKRNFRKLWIARINAAARMNGLSYSKLMHGLTLAGVELNRKMLAEIAVTDFDTFAKLADQAKAALASDNVLVQERVAATLETTVKVDR</sequence>
<keyword id="KW-1185">Reference proteome</keyword>
<keyword id="KW-0687">Ribonucleoprotein</keyword>
<keyword id="KW-0689">Ribosomal protein</keyword>
<keyword id="KW-0694">RNA-binding</keyword>
<keyword id="KW-0699">rRNA-binding</keyword>
<proteinExistence type="inferred from homology"/>
<comment type="function">
    <text evidence="1">Binds directly to 23S ribosomal RNA and is necessary for the in vitro assembly process of the 50S ribosomal subunit. It is not involved in the protein synthesizing functions of that subunit.</text>
</comment>
<comment type="similarity">
    <text evidence="1">Belongs to the bacterial ribosomal protein bL20 family.</text>
</comment>